<reference key="1">
    <citation type="journal article" date="2003" name="Nat. Biotechnol.">
        <title>The genome sequence of the entomopathogenic bacterium Photorhabdus luminescens.</title>
        <authorList>
            <person name="Duchaud E."/>
            <person name="Rusniok C."/>
            <person name="Frangeul L."/>
            <person name="Buchrieser C."/>
            <person name="Givaudan A."/>
            <person name="Taourit S."/>
            <person name="Bocs S."/>
            <person name="Boursaux-Eude C."/>
            <person name="Chandler M."/>
            <person name="Charles J.-F."/>
            <person name="Dassa E."/>
            <person name="Derose R."/>
            <person name="Derzelle S."/>
            <person name="Freyssinet G."/>
            <person name="Gaudriault S."/>
            <person name="Medigue C."/>
            <person name="Lanois A."/>
            <person name="Powell K."/>
            <person name="Siguier P."/>
            <person name="Vincent R."/>
            <person name="Wingate V."/>
            <person name="Zouine M."/>
            <person name="Glaser P."/>
            <person name="Boemare N."/>
            <person name="Danchin A."/>
            <person name="Kunst F."/>
        </authorList>
    </citation>
    <scope>NUCLEOTIDE SEQUENCE [LARGE SCALE GENOMIC DNA]</scope>
    <source>
        <strain>DSM 15139 / CIP 105565 / TT01</strain>
    </source>
</reference>
<evidence type="ECO:0000255" key="1">
    <source>
        <dbReference type="HAMAP-Rule" id="MF_00374"/>
    </source>
</evidence>
<evidence type="ECO:0000305" key="2"/>
<protein>
    <recommendedName>
        <fullName evidence="1">Large ribosomal subunit protein uL29</fullName>
    </recommendedName>
    <alternativeName>
        <fullName evidence="2">50S ribosomal protein L29</fullName>
    </alternativeName>
</protein>
<keyword id="KW-1185">Reference proteome</keyword>
<keyword id="KW-0687">Ribonucleoprotein</keyword>
<keyword id="KW-0689">Ribosomal protein</keyword>
<gene>
    <name evidence="1" type="primary">rpmC</name>
    <name type="ordered locus">plu4718</name>
</gene>
<dbReference type="EMBL" id="BX571874">
    <property type="protein sequence ID" value="CAE17090.1"/>
    <property type="molecule type" value="Genomic_DNA"/>
</dbReference>
<dbReference type="RefSeq" id="WP_011148787.1">
    <property type="nucleotide sequence ID" value="NC_005126.1"/>
</dbReference>
<dbReference type="SMR" id="Q7MYF9"/>
<dbReference type="STRING" id="243265.plu4718"/>
<dbReference type="GeneID" id="48850943"/>
<dbReference type="KEGG" id="plu:plu4718"/>
<dbReference type="eggNOG" id="COG0255">
    <property type="taxonomic scope" value="Bacteria"/>
</dbReference>
<dbReference type="HOGENOM" id="CLU_158491_1_2_6"/>
<dbReference type="OrthoDB" id="9815192at2"/>
<dbReference type="Proteomes" id="UP000002514">
    <property type="component" value="Chromosome"/>
</dbReference>
<dbReference type="GO" id="GO:0022625">
    <property type="term" value="C:cytosolic large ribosomal subunit"/>
    <property type="evidence" value="ECO:0007669"/>
    <property type="project" value="TreeGrafter"/>
</dbReference>
<dbReference type="GO" id="GO:0003735">
    <property type="term" value="F:structural constituent of ribosome"/>
    <property type="evidence" value="ECO:0007669"/>
    <property type="project" value="InterPro"/>
</dbReference>
<dbReference type="GO" id="GO:0006412">
    <property type="term" value="P:translation"/>
    <property type="evidence" value="ECO:0007669"/>
    <property type="project" value="UniProtKB-UniRule"/>
</dbReference>
<dbReference type="CDD" id="cd00427">
    <property type="entry name" value="Ribosomal_L29_HIP"/>
    <property type="match status" value="1"/>
</dbReference>
<dbReference type="FunFam" id="1.10.287.310:FF:000001">
    <property type="entry name" value="50S ribosomal protein L29"/>
    <property type="match status" value="1"/>
</dbReference>
<dbReference type="Gene3D" id="6.10.140.1970">
    <property type="match status" value="1"/>
</dbReference>
<dbReference type="HAMAP" id="MF_00374">
    <property type="entry name" value="Ribosomal_uL29"/>
    <property type="match status" value="1"/>
</dbReference>
<dbReference type="InterPro" id="IPR050063">
    <property type="entry name" value="Ribosomal_protein_uL29"/>
</dbReference>
<dbReference type="InterPro" id="IPR001854">
    <property type="entry name" value="Ribosomal_uL29"/>
</dbReference>
<dbReference type="InterPro" id="IPR018254">
    <property type="entry name" value="Ribosomal_uL29_CS"/>
</dbReference>
<dbReference type="InterPro" id="IPR036049">
    <property type="entry name" value="Ribosomal_uL29_sf"/>
</dbReference>
<dbReference type="NCBIfam" id="TIGR00012">
    <property type="entry name" value="L29"/>
    <property type="match status" value="1"/>
</dbReference>
<dbReference type="PANTHER" id="PTHR10916">
    <property type="entry name" value="60S RIBOSOMAL PROTEIN L35/50S RIBOSOMAL PROTEIN L29"/>
    <property type="match status" value="1"/>
</dbReference>
<dbReference type="PANTHER" id="PTHR10916:SF0">
    <property type="entry name" value="LARGE RIBOSOMAL SUBUNIT PROTEIN UL29C"/>
    <property type="match status" value="1"/>
</dbReference>
<dbReference type="Pfam" id="PF00831">
    <property type="entry name" value="Ribosomal_L29"/>
    <property type="match status" value="1"/>
</dbReference>
<dbReference type="SUPFAM" id="SSF46561">
    <property type="entry name" value="Ribosomal protein L29 (L29p)"/>
    <property type="match status" value="1"/>
</dbReference>
<dbReference type="PROSITE" id="PS00579">
    <property type="entry name" value="RIBOSOMAL_L29"/>
    <property type="match status" value="1"/>
</dbReference>
<organism>
    <name type="scientific">Photorhabdus laumondii subsp. laumondii (strain DSM 15139 / CIP 105565 / TT01)</name>
    <name type="common">Photorhabdus luminescens subsp. laumondii</name>
    <dbReference type="NCBI Taxonomy" id="243265"/>
    <lineage>
        <taxon>Bacteria</taxon>
        <taxon>Pseudomonadati</taxon>
        <taxon>Pseudomonadota</taxon>
        <taxon>Gammaproteobacteria</taxon>
        <taxon>Enterobacterales</taxon>
        <taxon>Morganellaceae</taxon>
        <taxon>Photorhabdus</taxon>
    </lineage>
</organism>
<accession>Q7MYF9</accession>
<proteinExistence type="inferred from homology"/>
<comment type="similarity">
    <text evidence="1">Belongs to the universal ribosomal protein uL29 family.</text>
</comment>
<sequence length="63" mass="7268">MKAQELREKSVEELKTELLNLLREQFNLRMQAASGQLQQSHLLKQVRHNIARVKTLLTEKAGA</sequence>
<name>RL29_PHOLL</name>
<feature type="chain" id="PRO_0000130432" description="Large ribosomal subunit protein uL29">
    <location>
        <begin position="1"/>
        <end position="63"/>
    </location>
</feature>